<protein>
    <recommendedName>
        <fullName>Nucleolar protein 16</fullName>
    </recommendedName>
</protein>
<name>NOP16_BOTFB</name>
<dbReference type="EMBL" id="CP009807">
    <property type="protein sequence ID" value="ATZ47812.1"/>
    <property type="molecule type" value="Genomic_DNA"/>
</dbReference>
<dbReference type="SMR" id="A6RNR4"/>
<dbReference type="EnsemblFungi" id="Bcin03g01090.1">
    <property type="protein sequence ID" value="Bcin03p01090.1"/>
    <property type="gene ID" value="Bcin03g01090"/>
</dbReference>
<dbReference type="GeneID" id="5440049"/>
<dbReference type="KEGG" id="bfu:BCIN_03g01090"/>
<dbReference type="VEuPathDB" id="FungiDB:Bcin03g01090"/>
<dbReference type="OMA" id="MQQTEAD"/>
<dbReference type="OrthoDB" id="285729at2759"/>
<dbReference type="Proteomes" id="UP000001798">
    <property type="component" value="Chromosome bcin03"/>
</dbReference>
<dbReference type="GO" id="GO:0005730">
    <property type="term" value="C:nucleolus"/>
    <property type="evidence" value="ECO:0007669"/>
    <property type="project" value="UniProtKB-SubCell"/>
</dbReference>
<dbReference type="GO" id="GO:0030687">
    <property type="term" value="C:preribosome, large subunit precursor"/>
    <property type="evidence" value="ECO:0007669"/>
    <property type="project" value="EnsemblFungi"/>
</dbReference>
<dbReference type="GO" id="GO:0042273">
    <property type="term" value="P:ribosomal large subunit biogenesis"/>
    <property type="evidence" value="ECO:0007669"/>
    <property type="project" value="EnsemblFungi"/>
</dbReference>
<dbReference type="GO" id="GO:0006364">
    <property type="term" value="P:rRNA processing"/>
    <property type="evidence" value="ECO:0007669"/>
    <property type="project" value="UniProtKB-KW"/>
</dbReference>
<dbReference type="InterPro" id="IPR019002">
    <property type="entry name" value="Ribosome_biogenesis_Nop16"/>
</dbReference>
<dbReference type="PANTHER" id="PTHR13243">
    <property type="entry name" value="HSPC111 PROTEIN-RELATED"/>
    <property type="match status" value="1"/>
</dbReference>
<dbReference type="PANTHER" id="PTHR13243:SF1">
    <property type="entry name" value="NUCLEOLAR PROTEIN 16"/>
    <property type="match status" value="1"/>
</dbReference>
<dbReference type="Pfam" id="PF09420">
    <property type="entry name" value="Nop16"/>
    <property type="match status" value="1"/>
</dbReference>
<comment type="function">
    <text evidence="1">Involved in the biogenesis of the 60S ribosomal subunit.</text>
</comment>
<comment type="subunit">
    <text evidence="1">Component of the pre-66S ribosomal particle.</text>
</comment>
<comment type="subcellular location">
    <subcellularLocation>
        <location evidence="1">Nucleus</location>
        <location evidence="1">Nucleolus</location>
    </subcellularLocation>
</comment>
<comment type="similarity">
    <text evidence="3">Belongs to the NOP16 family.</text>
</comment>
<organism>
    <name type="scientific">Botryotinia fuckeliana (strain B05.10)</name>
    <name type="common">Noble rot fungus</name>
    <name type="synonym">Botrytis cinerea</name>
    <dbReference type="NCBI Taxonomy" id="332648"/>
    <lineage>
        <taxon>Eukaryota</taxon>
        <taxon>Fungi</taxon>
        <taxon>Dikarya</taxon>
        <taxon>Ascomycota</taxon>
        <taxon>Pezizomycotina</taxon>
        <taxon>Leotiomycetes</taxon>
        <taxon>Helotiales</taxon>
        <taxon>Sclerotiniaceae</taxon>
        <taxon>Botrytis</taxon>
    </lineage>
</organism>
<proteinExistence type="inferred from homology"/>
<reference key="1">
    <citation type="journal article" date="2011" name="PLoS Genet.">
        <title>Genomic analysis of the necrotrophic fungal pathogens Sclerotinia sclerotiorum and Botrytis cinerea.</title>
        <authorList>
            <person name="Amselem J."/>
            <person name="Cuomo C.A."/>
            <person name="van Kan J.A.L."/>
            <person name="Viaud M."/>
            <person name="Benito E.P."/>
            <person name="Couloux A."/>
            <person name="Coutinho P.M."/>
            <person name="de Vries R.P."/>
            <person name="Dyer P.S."/>
            <person name="Fillinger S."/>
            <person name="Fournier E."/>
            <person name="Gout L."/>
            <person name="Hahn M."/>
            <person name="Kohn L."/>
            <person name="Lapalu N."/>
            <person name="Plummer K.M."/>
            <person name="Pradier J.-M."/>
            <person name="Quevillon E."/>
            <person name="Sharon A."/>
            <person name="Simon A."/>
            <person name="ten Have A."/>
            <person name="Tudzynski B."/>
            <person name="Tudzynski P."/>
            <person name="Wincker P."/>
            <person name="Andrew M."/>
            <person name="Anthouard V."/>
            <person name="Beever R.E."/>
            <person name="Beffa R."/>
            <person name="Benoit I."/>
            <person name="Bouzid O."/>
            <person name="Brault B."/>
            <person name="Chen Z."/>
            <person name="Choquer M."/>
            <person name="Collemare J."/>
            <person name="Cotton P."/>
            <person name="Danchin E.G."/>
            <person name="Da Silva C."/>
            <person name="Gautier A."/>
            <person name="Giraud C."/>
            <person name="Giraud T."/>
            <person name="Gonzalez C."/>
            <person name="Grossetete S."/>
            <person name="Gueldener U."/>
            <person name="Henrissat B."/>
            <person name="Howlett B.J."/>
            <person name="Kodira C."/>
            <person name="Kretschmer M."/>
            <person name="Lappartient A."/>
            <person name="Leroch M."/>
            <person name="Levis C."/>
            <person name="Mauceli E."/>
            <person name="Neuveglise C."/>
            <person name="Oeser B."/>
            <person name="Pearson M."/>
            <person name="Poulain J."/>
            <person name="Poussereau N."/>
            <person name="Quesneville H."/>
            <person name="Rascle C."/>
            <person name="Schumacher J."/>
            <person name="Segurens B."/>
            <person name="Sexton A."/>
            <person name="Silva E."/>
            <person name="Sirven C."/>
            <person name="Soanes D.M."/>
            <person name="Talbot N.J."/>
            <person name="Templeton M."/>
            <person name="Yandava C."/>
            <person name="Yarden O."/>
            <person name="Zeng Q."/>
            <person name="Rollins J.A."/>
            <person name="Lebrun M.-H."/>
            <person name="Dickman M."/>
        </authorList>
    </citation>
    <scope>NUCLEOTIDE SEQUENCE [LARGE SCALE GENOMIC DNA]</scope>
    <source>
        <strain>B05.10</strain>
    </source>
</reference>
<reference key="2">
    <citation type="journal article" date="2012" name="Eukaryot. Cell">
        <title>Genome update of Botrytis cinerea strains B05.10 and T4.</title>
        <authorList>
            <person name="Staats M."/>
            <person name="van Kan J.A.L."/>
        </authorList>
    </citation>
    <scope>NUCLEOTIDE SEQUENCE [LARGE SCALE GENOMIC DNA]</scope>
    <scope>GENOME REANNOTATION</scope>
    <source>
        <strain>B05.10</strain>
    </source>
</reference>
<reference key="3">
    <citation type="journal article" date="2017" name="Mol. Plant Pathol.">
        <title>A gapless genome sequence of the fungus Botrytis cinerea.</title>
        <authorList>
            <person name="van Kan J.A.L."/>
            <person name="Stassen J.H.M."/>
            <person name="Mosbach A."/>
            <person name="van der Lee T.A.J."/>
            <person name="Faino L."/>
            <person name="Farmer A.D."/>
            <person name="Papasotiriou D.G."/>
            <person name="Zhou S."/>
            <person name="Seidl M.F."/>
            <person name="Cottam E."/>
            <person name="Edel D."/>
            <person name="Hahn M."/>
            <person name="Schwartz D.C."/>
            <person name="Dietrich R.A."/>
            <person name="Widdison S."/>
            <person name="Scalliet G."/>
        </authorList>
    </citation>
    <scope>NUCLEOTIDE SEQUENCE [LARGE SCALE GENOMIC DNA]</scope>
    <scope>GENOME REANNOTATION</scope>
    <source>
        <strain>B05.10</strain>
    </source>
</reference>
<evidence type="ECO:0000250" key="1"/>
<evidence type="ECO:0000256" key="2">
    <source>
        <dbReference type="SAM" id="MobiDB-lite"/>
    </source>
</evidence>
<evidence type="ECO:0000305" key="3"/>
<sequence>MGRELQKKKNRSGNNKIKHKPKSKRINPLGNAIIAANWRQDETLTQNYRRLGLTSRLNTVTGGIEKKTAGSESKTSTANKLAISNAIPKNFAPTEARVERDPETGKIIRVIHDEKKSNPLNDPLNSDDEDGEGFEGFGDEEGSASKNEIVKMLEEQASRAGEKRERQQSEREKEWIEKLVKRWGENYGAMVRDRRLNPMQQTESDIRRRVQKWKDAGGVVTAEA</sequence>
<gene>
    <name type="primary">nop16</name>
    <name type="ORF">BC1G_02086</name>
    <name type="ORF">BCIN_03g01090</name>
</gene>
<keyword id="KW-0539">Nucleus</keyword>
<keyword id="KW-1185">Reference proteome</keyword>
<keyword id="KW-0687">Ribonucleoprotein</keyword>
<keyword id="KW-0690">Ribosome biogenesis</keyword>
<keyword id="KW-0698">rRNA processing</keyword>
<feature type="chain" id="PRO_0000320370" description="Nucleolar protein 16">
    <location>
        <begin position="1"/>
        <end position="224"/>
    </location>
</feature>
<feature type="region of interest" description="Disordered" evidence="2">
    <location>
        <begin position="1"/>
        <end position="27"/>
    </location>
</feature>
<feature type="region of interest" description="Disordered" evidence="2">
    <location>
        <begin position="110"/>
        <end position="173"/>
    </location>
</feature>
<feature type="compositionally biased region" description="Basic residues" evidence="2">
    <location>
        <begin position="8"/>
        <end position="25"/>
    </location>
</feature>
<feature type="compositionally biased region" description="Acidic residues" evidence="2">
    <location>
        <begin position="125"/>
        <end position="142"/>
    </location>
</feature>
<feature type="compositionally biased region" description="Basic and acidic residues" evidence="2">
    <location>
        <begin position="148"/>
        <end position="173"/>
    </location>
</feature>
<accession>A6RNR4</accession>
<accession>A0A384JBH1</accession>